<dbReference type="EC" id="1.14.11.55" evidence="4"/>
<dbReference type="EMBL" id="FN869568">
    <property type="protein sequence ID" value="CBV43892.1"/>
    <property type="molecule type" value="Genomic_DNA"/>
</dbReference>
<dbReference type="RefSeq" id="WP_013333764.1">
    <property type="nucleotide sequence ID" value="NC_014532.2"/>
</dbReference>
<dbReference type="SMR" id="E1VA04"/>
<dbReference type="STRING" id="768066.HELO_4008"/>
<dbReference type="GeneID" id="91011414"/>
<dbReference type="KEGG" id="hel:HELO_4008"/>
<dbReference type="eggNOG" id="COG5285">
    <property type="taxonomic scope" value="Bacteria"/>
</dbReference>
<dbReference type="HOGENOM" id="CLU_048953_5_0_6"/>
<dbReference type="OrthoDB" id="9791262at2"/>
<dbReference type="BRENDA" id="1.14.11.55">
    <property type="organism ID" value="2569"/>
</dbReference>
<dbReference type="Proteomes" id="UP000008707">
    <property type="component" value="Chromosome"/>
</dbReference>
<dbReference type="GO" id="GO:0016706">
    <property type="term" value="F:2-oxoglutarate-dependent dioxygenase activity"/>
    <property type="evidence" value="ECO:0000314"/>
    <property type="project" value="UniProtKB"/>
</dbReference>
<dbReference type="GO" id="GO:0005506">
    <property type="term" value="F:iron ion binding"/>
    <property type="evidence" value="ECO:0000314"/>
    <property type="project" value="UniProtKB"/>
</dbReference>
<dbReference type="Gene3D" id="2.60.120.620">
    <property type="entry name" value="q2cbj1_9rhob like domain"/>
    <property type="match status" value="1"/>
</dbReference>
<dbReference type="InterPro" id="IPR012774">
    <property type="entry name" value="EctD"/>
</dbReference>
<dbReference type="InterPro" id="IPR008775">
    <property type="entry name" value="Phytyl_CoA_dOase-like"/>
</dbReference>
<dbReference type="NCBIfam" id="TIGR02408">
    <property type="entry name" value="ectoine_ThpD"/>
    <property type="match status" value="1"/>
</dbReference>
<dbReference type="PANTHER" id="PTHR20883:SF48">
    <property type="entry name" value="ECTOINE DIOXYGENASE"/>
    <property type="match status" value="1"/>
</dbReference>
<dbReference type="PANTHER" id="PTHR20883">
    <property type="entry name" value="PHYTANOYL-COA DIOXYGENASE DOMAIN CONTAINING 1"/>
    <property type="match status" value="1"/>
</dbReference>
<dbReference type="Pfam" id="PF05721">
    <property type="entry name" value="PhyH"/>
    <property type="match status" value="1"/>
</dbReference>
<dbReference type="SUPFAM" id="SSF51197">
    <property type="entry name" value="Clavaminate synthase-like"/>
    <property type="match status" value="1"/>
</dbReference>
<name>ECTD_HALED</name>
<keyword id="KW-0223">Dioxygenase</keyword>
<keyword id="KW-0408">Iron</keyword>
<keyword id="KW-0479">Metal-binding</keyword>
<keyword id="KW-0560">Oxidoreductase</keyword>
<sequence length="332" mass="37378">MSVQTSSNRPLPQANLHIATETPEADSRIRSAPRPGQDPYPTRLSEPLDLPWLNRREPVVKGEEADGPLSAAQLDTFERQGFIFEPDFLKGEELEALRHELNALLARDDFRGRDFAITEPQGNEIRSLFAVHYLSRVFSRLANDERLMGRARQILGGEPYVHQSRINYKPGFEGKGFNWHSDFETWHAEDGMPAMHAVSASIVLTDNHTFNGPLMLVPGSHRVFVPCLGETPEDHHRQSLKTQEFGVPSRQALRELIDRHGIEAPTGAAGGLLLFDCNTLHGSNANMSPDPRSNAFFVYNRRDNRCVEPYAASKRRPRFLAHEPDEAWSPDG</sequence>
<organism>
    <name type="scientific">Halomonas elongata (strain ATCC 33173 / DSM 2581 / NBRC 15536 / NCIMB 2198 / 1H9)</name>
    <dbReference type="NCBI Taxonomy" id="768066"/>
    <lineage>
        <taxon>Bacteria</taxon>
        <taxon>Pseudomonadati</taxon>
        <taxon>Pseudomonadota</taxon>
        <taxon>Gammaproteobacteria</taxon>
        <taxon>Oceanospirillales</taxon>
        <taxon>Halomonadaceae</taxon>
        <taxon>Halomonas</taxon>
    </lineage>
</organism>
<evidence type="ECO:0000250" key="1">
    <source>
        <dbReference type="UniProtKB" id="Q1GNW5"/>
    </source>
</evidence>
<evidence type="ECO:0000250" key="2">
    <source>
        <dbReference type="UniProtKB" id="Q2TDY4"/>
    </source>
</evidence>
<evidence type="ECO:0000256" key="3">
    <source>
        <dbReference type="SAM" id="MobiDB-lite"/>
    </source>
</evidence>
<evidence type="ECO:0000269" key="4">
    <source>
    </source>
</evidence>
<evidence type="ECO:0000303" key="5">
    <source>
    </source>
</evidence>
<evidence type="ECO:0000303" key="6">
    <source>
    </source>
</evidence>
<evidence type="ECO:0000305" key="7"/>
<evidence type="ECO:0000312" key="8">
    <source>
        <dbReference type="EMBL" id="CBV43892.1"/>
    </source>
</evidence>
<evidence type="ECO:0000312" key="9">
    <source>
        <dbReference type="Proteomes" id="UP000008707"/>
    </source>
</evidence>
<accession>E1VA04</accession>
<proteinExistence type="evidence at protein level"/>
<gene>
    <name evidence="5" type="primary">ectD</name>
    <name evidence="8" type="ordered locus">HELO_4008</name>
</gene>
<feature type="chain" id="PRO_0000445002" description="Ectoine dioxygenase">
    <location>
        <begin position="1"/>
        <end position="332"/>
    </location>
</feature>
<feature type="region of interest" description="Disordered" evidence="3">
    <location>
        <begin position="1"/>
        <end position="47"/>
    </location>
</feature>
<feature type="compositionally biased region" description="Polar residues" evidence="3">
    <location>
        <begin position="1"/>
        <end position="10"/>
    </location>
</feature>
<feature type="binding site" evidence="1">
    <location>
        <position position="163"/>
    </location>
    <ligand>
        <name>L-ectoine</name>
        <dbReference type="ChEBI" id="CHEBI:58515"/>
    </ligand>
</feature>
<feature type="binding site" evidence="1">
    <location>
        <position position="169"/>
    </location>
    <ligand>
        <name>2-oxoglutarate</name>
        <dbReference type="ChEBI" id="CHEBI:16810"/>
    </ligand>
</feature>
<feature type="binding site" evidence="2">
    <location>
        <position position="180"/>
    </location>
    <ligand>
        <name>Fe cation</name>
        <dbReference type="ChEBI" id="CHEBI:24875"/>
    </ligand>
</feature>
<feature type="binding site" evidence="2">
    <location>
        <position position="182"/>
    </location>
    <ligand>
        <name>Fe cation</name>
        <dbReference type="ChEBI" id="CHEBI:24875"/>
    </ligand>
</feature>
<feature type="binding site" evidence="2">
    <location>
        <position position="281"/>
    </location>
    <ligand>
        <name>Fe cation</name>
        <dbReference type="ChEBI" id="CHEBI:24875"/>
    </ligand>
</feature>
<feature type="site" description="Important for ectoine stabilization" evidence="1">
    <location>
        <position position="186"/>
    </location>
</feature>
<reference key="1">
    <citation type="journal article" date="2011" name="Environ. Microbiol.">
        <title>A blueprint of ectoine metabolism from the genome of the industrial producer Halomonas elongata DSM 2581(T).</title>
        <authorList>
            <person name="Schwibbert K."/>
            <person name="Marin-Sanguino A."/>
            <person name="Bagyan I."/>
            <person name="Heidrich G."/>
            <person name="Lentzen G."/>
            <person name="Seitz H."/>
            <person name="Rampp M."/>
            <person name="Schuster S.C."/>
            <person name="Klenk H.P."/>
            <person name="Pfeiffer F."/>
            <person name="Oesterhelt D."/>
            <person name="Kunte H.J."/>
        </authorList>
    </citation>
    <scope>NUCLEOTIDE SEQUENCE [LARGE SCALE GENOMIC DNA]</scope>
    <source>
        <strain evidence="9">ATCC 33173 / DSM 2581 / NBRC 15536 / NCIMB 2198 / 1H9</strain>
    </source>
</reference>
<reference key="2">
    <citation type="journal article" date="2014" name="PLoS ONE">
        <title>Biochemical properties of ectoine hydroxylases from extremophiles and their wider taxonomic distribution among microorganisms.</title>
        <authorList>
            <person name="Widderich N."/>
            <person name="Hoppner A."/>
            <person name="Pittelkow M."/>
            <person name="Heider J."/>
            <person name="Smits S.H."/>
            <person name="Bremer E."/>
        </authorList>
    </citation>
    <scope>FUNCTION</scope>
    <scope>CATALYTIC ACTIVITY</scope>
    <scope>BIOPHYSICOCHEMICAL PROPERTIES</scope>
    <scope>COFACTOR</scope>
    <scope>SUBUNIT</scope>
    <source>
        <strain>ATCC 33173 / DSM 2581 / NBRC 15536 / NCIMB 2198 / 1H9</strain>
    </source>
</reference>
<protein>
    <recommendedName>
        <fullName evidence="6">Ectoine dioxygenase</fullName>
        <ecNumber evidence="4">1.14.11.55</ecNumber>
    </recommendedName>
    <alternativeName>
        <fullName evidence="6">Ectoine hydroxylase</fullName>
    </alternativeName>
</protein>
<comment type="function">
    <text evidence="4">Involved in the biosynthesis of 5-hydroxyectoine, called compatible solute, which helps organisms to survive extreme osmotic stress by acting as a highly soluble organic osmolyte. Catalyzes the 2-oxoglutarate-dependent selective hydroxylation of L-ectoine to yield (4S,5S)-5-hydroxyectoine.</text>
</comment>
<comment type="catalytic activity">
    <reaction evidence="4">
        <text>L-ectoine + 2-oxoglutarate + O2 = 5-hydroxyectoine + succinate + CO2</text>
        <dbReference type="Rhea" id="RHEA:45740"/>
        <dbReference type="ChEBI" id="CHEBI:15379"/>
        <dbReference type="ChEBI" id="CHEBI:16526"/>
        <dbReference type="ChEBI" id="CHEBI:16810"/>
        <dbReference type="ChEBI" id="CHEBI:30031"/>
        <dbReference type="ChEBI" id="CHEBI:58515"/>
        <dbReference type="ChEBI" id="CHEBI:85413"/>
        <dbReference type="EC" id="1.14.11.55"/>
    </reaction>
</comment>
<comment type="cofactor">
    <cofactor evidence="4">
        <name>Fe(2+)</name>
        <dbReference type="ChEBI" id="CHEBI:29033"/>
    </cofactor>
    <text evidence="4">Binds 1 Fe(2+) ion.</text>
</comment>
<comment type="biophysicochemical properties">
    <kinetics>
        <KM evidence="4">4.8 mM for 2-oxoglutarate (at pH 8 and 32 degrees Celsius)</KM>
        <KM evidence="4">5.7 mM for ectoine (at pH 8 and 32 degrees Celsius)</KM>
        <Vmax evidence="4">2.5 umol/min/mg enzyme (at pH 8 and 32 degrees Celsius)</Vmax>
        <text evidence="4">kcat is 2.8 sec(-1) for ectoin as substrate (at pH 8 and 32 degrees Celsius).</text>
    </kinetics>
    <phDependence>
        <text evidence="4">Optimum pH is 8.</text>
    </phDependence>
    <temperatureDependence>
        <text evidence="4">Optimum temperature is 32 degrees Celsius (PubMed:24714029). Active from 5 to 47 degrees Celsius (PubMed:24714029).</text>
    </temperatureDependence>
</comment>
<comment type="subunit">
    <text evidence="4">Homodimer.</text>
</comment>
<comment type="similarity">
    <text evidence="7">Belongs to the PhyH family. EctD subfamily.</text>
</comment>